<organism>
    <name type="scientific">Mycoplasma genitalium (strain ATCC 33530 / DSM 19775 / NCTC 10195 / G37)</name>
    <name type="common">Mycoplasmoides genitalium</name>
    <dbReference type="NCBI Taxonomy" id="243273"/>
    <lineage>
        <taxon>Bacteria</taxon>
        <taxon>Bacillati</taxon>
        <taxon>Mycoplasmatota</taxon>
        <taxon>Mycoplasmoidales</taxon>
        <taxon>Mycoplasmoidaceae</taxon>
        <taxon>Mycoplasmoides</taxon>
    </lineage>
</organism>
<protein>
    <recommendedName>
        <fullName>HPr kinase/phosphorylase</fullName>
        <shortName>HPrK/P</shortName>
        <ecNumber>2.7.11.-</ecNumber>
        <ecNumber>2.7.4.-</ecNumber>
    </recommendedName>
    <alternativeName>
        <fullName>HPr(Ser) kinase/phosphorylase</fullName>
    </alternativeName>
</protein>
<reference key="1">
    <citation type="journal article" date="1995" name="Science">
        <title>The minimal gene complement of Mycoplasma genitalium.</title>
        <authorList>
            <person name="Fraser C.M."/>
            <person name="Gocayne J.D."/>
            <person name="White O."/>
            <person name="Adams M.D."/>
            <person name="Clayton R.A."/>
            <person name="Fleischmann R.D."/>
            <person name="Bult C.J."/>
            <person name="Kerlavage A.R."/>
            <person name="Sutton G.G."/>
            <person name="Kelley J.M."/>
            <person name="Fritchman J.L."/>
            <person name="Weidman J.F."/>
            <person name="Small K.V."/>
            <person name="Sandusky M."/>
            <person name="Fuhrmann J.L."/>
            <person name="Nguyen D.T."/>
            <person name="Utterback T.R."/>
            <person name="Saudek D.M."/>
            <person name="Phillips C.A."/>
            <person name="Merrick J.M."/>
            <person name="Tomb J.-F."/>
            <person name="Dougherty B.A."/>
            <person name="Bott K.F."/>
            <person name="Hu P.-C."/>
            <person name="Lucier T.S."/>
            <person name="Peterson S.N."/>
            <person name="Smith H.O."/>
            <person name="Hutchison C.A. III"/>
            <person name="Venter J.C."/>
        </authorList>
    </citation>
    <scope>NUCLEOTIDE SEQUENCE [LARGE SCALE GENOMIC DNA]</scope>
    <source>
        <strain>ATCC 33530 / DSM 19775 / NCTC 10195 / G37</strain>
    </source>
</reference>
<reference key="2">
    <citation type="journal article" date="1993" name="J. Bacteriol.">
        <title>A survey of the Mycoplasma genitalium genome by using random sequencing.</title>
        <authorList>
            <person name="Peterson S.N."/>
            <person name="Hu P.-C."/>
            <person name="Bott K.F."/>
            <person name="Hutchison C.A. III"/>
        </authorList>
    </citation>
    <scope>NUCLEOTIDE SEQUENCE [GENOMIC DNA] OF 1-63</scope>
    <source>
        <strain>ATCC 33530 / DSM 19775 / NCTC 10195 / G37</strain>
    </source>
</reference>
<feature type="chain" id="PRO_0000058970" description="HPr kinase/phosphorylase">
    <location>
        <begin position="1"/>
        <end position="311"/>
    </location>
</feature>
<feature type="region of interest" description="Important for the catalytic mechanism of both phosphorylation and dephosphorylation" evidence="1">
    <location>
        <begin position="201"/>
        <end position="210"/>
    </location>
</feature>
<feature type="region of interest" description="Important for the catalytic mechanism of dephosphorylation" evidence="1">
    <location>
        <begin position="266"/>
        <end position="271"/>
    </location>
</feature>
<feature type="active site" evidence="1">
    <location>
        <position position="139"/>
    </location>
</feature>
<feature type="active site" evidence="1">
    <location>
        <position position="160"/>
    </location>
</feature>
<feature type="active site" description="Proton acceptor; for phosphorylation activity. Proton donor; for dephosphorylation activity" evidence="1">
    <location>
        <position position="178"/>
    </location>
</feature>
<feature type="active site" evidence="1">
    <location>
        <position position="245"/>
    </location>
</feature>
<feature type="binding site" evidence="1">
    <location>
        <begin position="154"/>
        <end position="161"/>
    </location>
    <ligand>
        <name>ATP</name>
        <dbReference type="ChEBI" id="CHEBI:30616"/>
    </ligand>
</feature>
<feature type="binding site" evidence="2">
    <location>
        <position position="161"/>
    </location>
    <ligand>
        <name>Mg(2+)</name>
        <dbReference type="ChEBI" id="CHEBI:18420"/>
    </ligand>
</feature>
<feature type="binding site" evidence="2">
    <location>
        <position position="202"/>
    </location>
    <ligand>
        <name>Mg(2+)</name>
        <dbReference type="ChEBI" id="CHEBI:18420"/>
    </ligand>
</feature>
<feature type="sequence conflict" description="In Ref. 2." evidence="3" ref="2">
    <original>KREFI</original>
    <variation>NVIYF</variation>
    <location>
        <begin position="58"/>
        <end position="62"/>
    </location>
</feature>
<sequence>MKHLTVKALVLQFNDCIQLIDGKNNIDNVITIPGLKRSVFELLGLFCKPIGSVAILGKREFIFLNQKPVEQQKKIIANLLKLKPPAVILTKSFLDCGVLLAVNQTYQVPILKTNLFSTELSFTVETYINEQFATVQKLHGVLLEIFGVGVFLEGKSGIGKSESALDLINKNHLLIGDDAIEIYRLGNRLFGRAQALAKGFMEIRGLGIINIERAYGLQITKEQTEIQLAISLLSLEEKNNASFERLGSDLKLKNLLGVKISYYQIPISSGRKTSEIIESAVIDFKLKKSGYNSANEFILKQRAMLEEQTDE</sequence>
<dbReference type="EC" id="2.7.11.-"/>
<dbReference type="EC" id="2.7.4.-"/>
<dbReference type="EMBL" id="L43967">
    <property type="protein sequence ID" value="AAC71303.1"/>
    <property type="molecule type" value="Genomic_DNA"/>
</dbReference>
<dbReference type="EMBL" id="U01783">
    <property type="protein sequence ID" value="AAD10604.1"/>
    <property type="molecule type" value="Genomic_DNA"/>
</dbReference>
<dbReference type="PIR" id="D64209">
    <property type="entry name" value="D64209"/>
</dbReference>
<dbReference type="RefSeq" id="WP_010869325.1">
    <property type="nucleotide sequence ID" value="NC_000908.2"/>
</dbReference>
<dbReference type="SMR" id="P47331"/>
<dbReference type="FunCoup" id="P47331">
    <property type="interactions" value="1"/>
</dbReference>
<dbReference type="STRING" id="243273.MG_085"/>
<dbReference type="GeneID" id="88282208"/>
<dbReference type="KEGG" id="mge:MG_085"/>
<dbReference type="eggNOG" id="COG1493">
    <property type="taxonomic scope" value="Bacteria"/>
</dbReference>
<dbReference type="HOGENOM" id="CLU_052030_0_1_14"/>
<dbReference type="InParanoid" id="P47331"/>
<dbReference type="OrthoDB" id="9778803at2"/>
<dbReference type="BioCyc" id="MGEN243273:G1GJ2-97-MONOMER"/>
<dbReference type="Proteomes" id="UP000000807">
    <property type="component" value="Chromosome"/>
</dbReference>
<dbReference type="GO" id="GO:0005829">
    <property type="term" value="C:cytosol"/>
    <property type="evidence" value="ECO:0000318"/>
    <property type="project" value="GO_Central"/>
</dbReference>
<dbReference type="GO" id="GO:0005524">
    <property type="term" value="F:ATP binding"/>
    <property type="evidence" value="ECO:0007669"/>
    <property type="project" value="UniProtKB-UniRule"/>
</dbReference>
<dbReference type="GO" id="GO:0000287">
    <property type="term" value="F:magnesium ion binding"/>
    <property type="evidence" value="ECO:0007669"/>
    <property type="project" value="UniProtKB-UniRule"/>
</dbReference>
<dbReference type="GO" id="GO:0000155">
    <property type="term" value="F:phosphorelay sensor kinase activity"/>
    <property type="evidence" value="ECO:0007669"/>
    <property type="project" value="InterPro"/>
</dbReference>
<dbReference type="GO" id="GO:0004674">
    <property type="term" value="F:protein serine/threonine kinase activity"/>
    <property type="evidence" value="ECO:0007669"/>
    <property type="project" value="UniProtKB-KW"/>
</dbReference>
<dbReference type="GO" id="GO:0004712">
    <property type="term" value="F:protein serine/threonine/tyrosine kinase activity"/>
    <property type="evidence" value="ECO:0007669"/>
    <property type="project" value="UniProtKB-UniRule"/>
</dbReference>
<dbReference type="GO" id="GO:0006109">
    <property type="term" value="P:regulation of carbohydrate metabolic process"/>
    <property type="evidence" value="ECO:0007669"/>
    <property type="project" value="UniProtKB-UniRule"/>
</dbReference>
<dbReference type="CDD" id="cd01918">
    <property type="entry name" value="HprK_C"/>
    <property type="match status" value="1"/>
</dbReference>
<dbReference type="Gene3D" id="3.40.1390.20">
    <property type="entry name" value="HprK N-terminal domain-like"/>
    <property type="match status" value="1"/>
</dbReference>
<dbReference type="Gene3D" id="3.40.50.300">
    <property type="entry name" value="P-loop containing nucleotide triphosphate hydrolases"/>
    <property type="match status" value="1"/>
</dbReference>
<dbReference type="HAMAP" id="MF_01249">
    <property type="entry name" value="HPr_kinase"/>
    <property type="match status" value="1"/>
</dbReference>
<dbReference type="InterPro" id="IPR003755">
    <property type="entry name" value="HPr(Ser)_kin/Pase"/>
</dbReference>
<dbReference type="InterPro" id="IPR011104">
    <property type="entry name" value="Hpr_kin/Pase_C"/>
</dbReference>
<dbReference type="InterPro" id="IPR011126">
    <property type="entry name" value="Hpr_kin/Pase_Hpr_N"/>
</dbReference>
<dbReference type="InterPro" id="IPR027417">
    <property type="entry name" value="P-loop_NTPase"/>
</dbReference>
<dbReference type="InterPro" id="IPR028979">
    <property type="entry name" value="Ser_kin/Pase_Hpr-like_N_sf"/>
</dbReference>
<dbReference type="NCBIfam" id="TIGR00679">
    <property type="entry name" value="hpr-ser"/>
    <property type="match status" value="1"/>
</dbReference>
<dbReference type="PANTHER" id="PTHR30305:SF1">
    <property type="entry name" value="HPR KINASE_PHOSPHORYLASE"/>
    <property type="match status" value="1"/>
</dbReference>
<dbReference type="PANTHER" id="PTHR30305">
    <property type="entry name" value="PROTEIN YJDM-RELATED"/>
    <property type="match status" value="1"/>
</dbReference>
<dbReference type="Pfam" id="PF07475">
    <property type="entry name" value="Hpr_kinase_C"/>
    <property type="match status" value="1"/>
</dbReference>
<dbReference type="Pfam" id="PF02603">
    <property type="entry name" value="Hpr_kinase_N"/>
    <property type="match status" value="1"/>
</dbReference>
<dbReference type="SUPFAM" id="SSF75138">
    <property type="entry name" value="HprK N-terminal domain-like"/>
    <property type="match status" value="1"/>
</dbReference>
<dbReference type="SUPFAM" id="SSF53795">
    <property type="entry name" value="PEP carboxykinase-like"/>
    <property type="match status" value="1"/>
</dbReference>
<comment type="function">
    <text evidence="1">Catalyzes the ATP- as well as the pyrophosphate-dependent phosphorylation of a specific serine residue in HPr, a phosphocarrier protein of the phosphoenolpyruvate-dependent sugar phosphotransferase system (PTS). HprK/P also catalyzes the pyrophosphate-producing, inorganic phosphate-dependent dephosphorylation (phosphorolysis) of seryl-phosphorylated HPr (P-Ser-HPr) (By similarity).</text>
</comment>
<comment type="catalytic activity">
    <reaction>
        <text>[HPr protein]-L-serine + ATP = [HPr protein]-O-phospho-L-serine + ADP + H(+)</text>
        <dbReference type="Rhea" id="RHEA:46600"/>
        <dbReference type="Rhea" id="RHEA-COMP:11602"/>
        <dbReference type="Rhea" id="RHEA-COMP:11603"/>
        <dbReference type="ChEBI" id="CHEBI:15378"/>
        <dbReference type="ChEBI" id="CHEBI:29999"/>
        <dbReference type="ChEBI" id="CHEBI:30616"/>
        <dbReference type="ChEBI" id="CHEBI:83421"/>
        <dbReference type="ChEBI" id="CHEBI:456216"/>
    </reaction>
</comment>
<comment type="catalytic activity">
    <reaction>
        <text>[HPr protein]-O-phospho-L-serine + phosphate + H(+) = [HPr protein]-L-serine + diphosphate</text>
        <dbReference type="Rhea" id="RHEA:46604"/>
        <dbReference type="Rhea" id="RHEA-COMP:11602"/>
        <dbReference type="Rhea" id="RHEA-COMP:11603"/>
        <dbReference type="ChEBI" id="CHEBI:15378"/>
        <dbReference type="ChEBI" id="CHEBI:29999"/>
        <dbReference type="ChEBI" id="CHEBI:33019"/>
        <dbReference type="ChEBI" id="CHEBI:43474"/>
        <dbReference type="ChEBI" id="CHEBI:83421"/>
    </reaction>
</comment>
<comment type="cofactor">
    <cofactor evidence="1">
        <name>Mg(2+)</name>
        <dbReference type="ChEBI" id="CHEBI:18420"/>
    </cofactor>
</comment>
<comment type="subunit">
    <text evidence="1">Homohexamer.</text>
</comment>
<comment type="domain">
    <text evidence="1">The Walker A ATP-binding motif also binds Pi and PPi.</text>
</comment>
<comment type="miscellaneous">
    <text evidence="1">Both phosphorylation and phosphorolysis are carried out by the same active site and suggest a common mechanism for both reactions.</text>
</comment>
<comment type="similarity">
    <text evidence="3">Belongs to the HPrK/P family.</text>
</comment>
<name>HPRK_MYCGE</name>
<gene>
    <name type="primary">hprK</name>
    <name type="ordered locus">MG085</name>
</gene>
<evidence type="ECO:0000250" key="1"/>
<evidence type="ECO:0000255" key="2"/>
<evidence type="ECO:0000305" key="3"/>
<keyword id="KW-0067">ATP-binding</keyword>
<keyword id="KW-0119">Carbohydrate metabolism</keyword>
<keyword id="KW-0418">Kinase</keyword>
<keyword id="KW-0460">Magnesium</keyword>
<keyword id="KW-0479">Metal-binding</keyword>
<keyword id="KW-0511">Multifunctional enzyme</keyword>
<keyword id="KW-0547">Nucleotide-binding</keyword>
<keyword id="KW-1185">Reference proteome</keyword>
<keyword id="KW-0723">Serine/threonine-protein kinase</keyword>
<keyword id="KW-0808">Transferase</keyword>
<proteinExistence type="inferred from homology"/>
<accession>P47331</accession>
<accession>Q49232</accession>